<reference key="1">
    <citation type="journal article" date="1996" name="Science">
        <title>Complete genome sequence of the methanogenic archaeon, Methanococcus jannaschii.</title>
        <authorList>
            <person name="Bult C.J."/>
            <person name="White O."/>
            <person name="Olsen G.J."/>
            <person name="Zhou L."/>
            <person name="Fleischmann R.D."/>
            <person name="Sutton G.G."/>
            <person name="Blake J.A."/>
            <person name="FitzGerald L.M."/>
            <person name="Clayton R.A."/>
            <person name="Gocayne J.D."/>
            <person name="Kerlavage A.R."/>
            <person name="Dougherty B.A."/>
            <person name="Tomb J.-F."/>
            <person name="Adams M.D."/>
            <person name="Reich C.I."/>
            <person name="Overbeek R."/>
            <person name="Kirkness E.F."/>
            <person name="Weinstock K.G."/>
            <person name="Merrick J.M."/>
            <person name="Glodek A."/>
            <person name="Scott J.L."/>
            <person name="Geoghagen N.S.M."/>
            <person name="Weidman J.F."/>
            <person name="Fuhrmann J.L."/>
            <person name="Nguyen D."/>
            <person name="Utterback T.R."/>
            <person name="Kelley J.M."/>
            <person name="Peterson J.D."/>
            <person name="Sadow P.W."/>
            <person name="Hanna M.C."/>
            <person name="Cotton M.D."/>
            <person name="Roberts K.M."/>
            <person name="Hurst M.A."/>
            <person name="Kaine B.P."/>
            <person name="Borodovsky M."/>
            <person name="Klenk H.-P."/>
            <person name="Fraser C.M."/>
            <person name="Smith H.O."/>
            <person name="Woese C.R."/>
            <person name="Venter J.C."/>
        </authorList>
    </citation>
    <scope>NUCLEOTIDE SEQUENCE [LARGE SCALE GENOMIC DNA]</scope>
    <source>
        <strain>ATCC 43067 / DSM 2661 / JAL-1 / JCM 10045 / NBRC 100440</strain>
    </source>
</reference>
<sequence length="202" mass="23743">MKIMEIFEFKGNGVKKLFIGGLHGNEGKFTEIILKDFVNSLKECNYIGDIVVIPKLVENSKYISTLSEKYYESDEGKTLINIIKKYKPKVYFELHAYKKENYKKLTSNNRKKVPPLIDIGNNVLIASISPILRKRFSKEDFCMTIEIPSWKVYEVKDEILKILKIGAESLRREEIIEKLKKIYPEHIEKAEYFSKKYNLMLF</sequence>
<protein>
    <recommendedName>
        <fullName>Uncharacterized protein MJ0501</fullName>
    </recommendedName>
</protein>
<keyword id="KW-1185">Reference proteome</keyword>
<accession>Q57924</accession>
<dbReference type="EMBL" id="L77117">
    <property type="protein sequence ID" value="AAB98492.1"/>
    <property type="molecule type" value="Genomic_DNA"/>
</dbReference>
<dbReference type="PIR" id="E64362">
    <property type="entry name" value="E64362"/>
</dbReference>
<dbReference type="SMR" id="Q57924"/>
<dbReference type="STRING" id="243232.MJ_0501"/>
<dbReference type="PaxDb" id="243232-MJ_0501"/>
<dbReference type="EnsemblBacteria" id="AAB98492">
    <property type="protein sequence ID" value="AAB98492"/>
    <property type="gene ID" value="MJ_0501"/>
</dbReference>
<dbReference type="KEGG" id="mja:MJ_0501"/>
<dbReference type="eggNOG" id="arCOG04894">
    <property type="taxonomic scope" value="Archaea"/>
</dbReference>
<dbReference type="HOGENOM" id="CLU_087505_0_0_2"/>
<dbReference type="InParanoid" id="Q57924"/>
<dbReference type="OrthoDB" id="70832at2157"/>
<dbReference type="PhylomeDB" id="Q57924"/>
<dbReference type="Proteomes" id="UP000000805">
    <property type="component" value="Chromosome"/>
</dbReference>
<dbReference type="InterPro" id="IPR019218">
    <property type="entry name" value="DUF2119"/>
</dbReference>
<dbReference type="Pfam" id="PF09892">
    <property type="entry name" value="DUF2119"/>
    <property type="match status" value="1"/>
</dbReference>
<dbReference type="PIRSF" id="PIRSF005919">
    <property type="entry name" value="UCP005919"/>
    <property type="match status" value="1"/>
</dbReference>
<proteinExistence type="predicted"/>
<organism>
    <name type="scientific">Methanocaldococcus jannaschii (strain ATCC 43067 / DSM 2661 / JAL-1 / JCM 10045 / NBRC 100440)</name>
    <name type="common">Methanococcus jannaschii</name>
    <dbReference type="NCBI Taxonomy" id="243232"/>
    <lineage>
        <taxon>Archaea</taxon>
        <taxon>Methanobacteriati</taxon>
        <taxon>Methanobacteriota</taxon>
        <taxon>Methanomada group</taxon>
        <taxon>Methanococci</taxon>
        <taxon>Methanococcales</taxon>
        <taxon>Methanocaldococcaceae</taxon>
        <taxon>Methanocaldococcus</taxon>
    </lineage>
</organism>
<gene>
    <name type="ordered locus">MJ0501</name>
</gene>
<feature type="chain" id="PRO_0000106902" description="Uncharacterized protein MJ0501">
    <location>
        <begin position="1"/>
        <end position="202"/>
    </location>
</feature>
<name>Y501_METJA</name>